<proteinExistence type="inferred from homology"/>
<accession>Q21M49</accession>
<keyword id="KW-1185">Reference proteome</keyword>
<keyword id="KW-0687">Ribonucleoprotein</keyword>
<keyword id="KW-0689">Ribosomal protein</keyword>
<keyword id="KW-0694">RNA-binding</keyword>
<keyword id="KW-0699">rRNA-binding</keyword>
<sequence>MTEAKKLVRTLTGKVVSDKMEKSIVVLIERRVKHPVYGKYVSKSTKMKAHDEANDCKIGDTVTIAESRPLSKTKSWTLVKIEERATQI</sequence>
<name>RS17_SACD2</name>
<gene>
    <name evidence="1" type="primary">rpsQ</name>
    <name type="ordered locus">Sde_0968</name>
</gene>
<feature type="chain" id="PRO_0000255700" description="Small ribosomal subunit protein uS17">
    <location>
        <begin position="1"/>
        <end position="88"/>
    </location>
</feature>
<dbReference type="EMBL" id="CP000282">
    <property type="protein sequence ID" value="ABD80230.1"/>
    <property type="molecule type" value="Genomic_DNA"/>
</dbReference>
<dbReference type="RefSeq" id="WP_011467450.1">
    <property type="nucleotide sequence ID" value="NC_007912.1"/>
</dbReference>
<dbReference type="SMR" id="Q21M49"/>
<dbReference type="STRING" id="203122.Sde_0968"/>
<dbReference type="GeneID" id="98612654"/>
<dbReference type="KEGG" id="sde:Sde_0968"/>
<dbReference type="eggNOG" id="COG0186">
    <property type="taxonomic scope" value="Bacteria"/>
</dbReference>
<dbReference type="HOGENOM" id="CLU_073626_1_1_6"/>
<dbReference type="OrthoDB" id="9811714at2"/>
<dbReference type="Proteomes" id="UP000001947">
    <property type="component" value="Chromosome"/>
</dbReference>
<dbReference type="GO" id="GO:0022627">
    <property type="term" value="C:cytosolic small ribosomal subunit"/>
    <property type="evidence" value="ECO:0007669"/>
    <property type="project" value="TreeGrafter"/>
</dbReference>
<dbReference type="GO" id="GO:0019843">
    <property type="term" value="F:rRNA binding"/>
    <property type="evidence" value="ECO:0007669"/>
    <property type="project" value="UniProtKB-UniRule"/>
</dbReference>
<dbReference type="GO" id="GO:0003735">
    <property type="term" value="F:structural constituent of ribosome"/>
    <property type="evidence" value="ECO:0007669"/>
    <property type="project" value="InterPro"/>
</dbReference>
<dbReference type="GO" id="GO:0006412">
    <property type="term" value="P:translation"/>
    <property type="evidence" value="ECO:0007669"/>
    <property type="project" value="UniProtKB-UniRule"/>
</dbReference>
<dbReference type="CDD" id="cd00364">
    <property type="entry name" value="Ribosomal_uS17"/>
    <property type="match status" value="1"/>
</dbReference>
<dbReference type="FunFam" id="2.40.50.140:FF:000014">
    <property type="entry name" value="30S ribosomal protein S17"/>
    <property type="match status" value="1"/>
</dbReference>
<dbReference type="Gene3D" id="2.40.50.140">
    <property type="entry name" value="Nucleic acid-binding proteins"/>
    <property type="match status" value="1"/>
</dbReference>
<dbReference type="HAMAP" id="MF_01345_B">
    <property type="entry name" value="Ribosomal_uS17_B"/>
    <property type="match status" value="1"/>
</dbReference>
<dbReference type="InterPro" id="IPR012340">
    <property type="entry name" value="NA-bd_OB-fold"/>
</dbReference>
<dbReference type="InterPro" id="IPR000266">
    <property type="entry name" value="Ribosomal_uS17"/>
</dbReference>
<dbReference type="InterPro" id="IPR019984">
    <property type="entry name" value="Ribosomal_uS17_bact/chlr"/>
</dbReference>
<dbReference type="InterPro" id="IPR019979">
    <property type="entry name" value="Ribosomal_uS17_CS"/>
</dbReference>
<dbReference type="NCBIfam" id="NF004123">
    <property type="entry name" value="PRK05610.1"/>
    <property type="match status" value="1"/>
</dbReference>
<dbReference type="NCBIfam" id="TIGR03635">
    <property type="entry name" value="uS17_bact"/>
    <property type="match status" value="1"/>
</dbReference>
<dbReference type="PANTHER" id="PTHR10744">
    <property type="entry name" value="40S RIBOSOMAL PROTEIN S11 FAMILY MEMBER"/>
    <property type="match status" value="1"/>
</dbReference>
<dbReference type="PANTHER" id="PTHR10744:SF1">
    <property type="entry name" value="SMALL RIBOSOMAL SUBUNIT PROTEIN US17M"/>
    <property type="match status" value="1"/>
</dbReference>
<dbReference type="Pfam" id="PF00366">
    <property type="entry name" value="Ribosomal_S17"/>
    <property type="match status" value="1"/>
</dbReference>
<dbReference type="PRINTS" id="PR00973">
    <property type="entry name" value="RIBOSOMALS17"/>
</dbReference>
<dbReference type="SUPFAM" id="SSF50249">
    <property type="entry name" value="Nucleic acid-binding proteins"/>
    <property type="match status" value="1"/>
</dbReference>
<dbReference type="PROSITE" id="PS00056">
    <property type="entry name" value="RIBOSOMAL_S17"/>
    <property type="match status" value="1"/>
</dbReference>
<protein>
    <recommendedName>
        <fullName evidence="1">Small ribosomal subunit protein uS17</fullName>
    </recommendedName>
    <alternativeName>
        <fullName evidence="2">30S ribosomal protein S17</fullName>
    </alternativeName>
</protein>
<reference key="1">
    <citation type="journal article" date="2008" name="PLoS Genet.">
        <title>Complete genome sequence of the complex carbohydrate-degrading marine bacterium, Saccharophagus degradans strain 2-40 T.</title>
        <authorList>
            <person name="Weiner R.M."/>
            <person name="Taylor L.E. II"/>
            <person name="Henrissat B."/>
            <person name="Hauser L."/>
            <person name="Land M."/>
            <person name="Coutinho P.M."/>
            <person name="Rancurel C."/>
            <person name="Saunders E.H."/>
            <person name="Longmire A.G."/>
            <person name="Zhang H."/>
            <person name="Bayer E.A."/>
            <person name="Gilbert H.J."/>
            <person name="Larimer F."/>
            <person name="Zhulin I.B."/>
            <person name="Ekborg N.A."/>
            <person name="Lamed R."/>
            <person name="Richardson P.M."/>
            <person name="Borovok I."/>
            <person name="Hutcheson S."/>
        </authorList>
    </citation>
    <scope>NUCLEOTIDE SEQUENCE [LARGE SCALE GENOMIC DNA]</scope>
    <source>
        <strain>2-40 / ATCC 43961 / DSM 17024</strain>
    </source>
</reference>
<comment type="function">
    <text evidence="1">One of the primary rRNA binding proteins, it binds specifically to the 5'-end of 16S ribosomal RNA.</text>
</comment>
<comment type="subunit">
    <text evidence="1">Part of the 30S ribosomal subunit.</text>
</comment>
<comment type="similarity">
    <text evidence="1">Belongs to the universal ribosomal protein uS17 family.</text>
</comment>
<evidence type="ECO:0000255" key="1">
    <source>
        <dbReference type="HAMAP-Rule" id="MF_01345"/>
    </source>
</evidence>
<evidence type="ECO:0000305" key="2"/>
<organism>
    <name type="scientific">Saccharophagus degradans (strain 2-40 / ATCC 43961 / DSM 17024)</name>
    <dbReference type="NCBI Taxonomy" id="203122"/>
    <lineage>
        <taxon>Bacteria</taxon>
        <taxon>Pseudomonadati</taxon>
        <taxon>Pseudomonadota</taxon>
        <taxon>Gammaproteobacteria</taxon>
        <taxon>Cellvibrionales</taxon>
        <taxon>Cellvibrionaceae</taxon>
        <taxon>Saccharophagus</taxon>
    </lineage>
</organism>